<keyword id="KW-0227">DNA damage</keyword>
<keyword id="KW-0233">DNA recombination</keyword>
<keyword id="KW-0234">DNA repair</keyword>
<keyword id="KW-0479">Metal-binding</keyword>
<keyword id="KW-1185">Reference proteome</keyword>
<keyword id="KW-0862">Zinc</keyword>
<keyword id="KW-0863">Zinc-finger</keyword>
<reference key="1">
    <citation type="journal article" date="2006" name="Appl. Environ. Microbiol.">
        <title>Genome sequence of the chemolithoautotrophic nitrite-oxidizing bacterium Nitrobacter winogradskyi Nb-255.</title>
        <authorList>
            <person name="Starkenburg S.R."/>
            <person name="Chain P.S.G."/>
            <person name="Sayavedra-Soto L.A."/>
            <person name="Hauser L."/>
            <person name="Land M.L."/>
            <person name="Larimer F.W."/>
            <person name="Malfatti S.A."/>
            <person name="Klotz M.G."/>
            <person name="Bottomley P.J."/>
            <person name="Arp D.J."/>
            <person name="Hickey W.J."/>
        </authorList>
    </citation>
    <scope>NUCLEOTIDE SEQUENCE [LARGE SCALE GENOMIC DNA]</scope>
    <source>
        <strain>ATCC 25391 / DSM 10237 / CIP 104748 / NCIMB 11846 / Nb-255</strain>
    </source>
</reference>
<feature type="chain" id="PRO_1000057155" description="Recombination protein RecR">
    <location>
        <begin position="1"/>
        <end position="201"/>
    </location>
</feature>
<feature type="domain" description="Toprim" evidence="1">
    <location>
        <begin position="83"/>
        <end position="178"/>
    </location>
</feature>
<feature type="zinc finger region" description="C4-type" evidence="1">
    <location>
        <begin position="60"/>
        <end position="75"/>
    </location>
</feature>
<sequence>MPTAVTGPEIERLIQLLARLPGLGPRSARRAALHLIKKREALMAPLASALQVAIDRIRVCETCGNIDTRSPCTICTDARRDPSIIVVVADVADLWALERAGATNGFYHVLGATLSPLDGVGPQDLTIDALVARAHDPRVAEIVLALNATVDGQTTAHYITDLLGEANVKVTRLAHGVPVGGELDYLDEGTLSAAMRQRTLF</sequence>
<name>RECR_NITWN</name>
<accession>Q3SVQ7</accession>
<dbReference type="EMBL" id="CP000115">
    <property type="protein sequence ID" value="ABA03634.1"/>
    <property type="molecule type" value="Genomic_DNA"/>
</dbReference>
<dbReference type="RefSeq" id="WP_011313698.1">
    <property type="nucleotide sequence ID" value="NC_007406.1"/>
</dbReference>
<dbReference type="SMR" id="Q3SVQ7"/>
<dbReference type="STRING" id="323098.Nwi_0367"/>
<dbReference type="KEGG" id="nwi:Nwi_0367"/>
<dbReference type="eggNOG" id="COG0353">
    <property type="taxonomic scope" value="Bacteria"/>
</dbReference>
<dbReference type="HOGENOM" id="CLU_060739_1_1_5"/>
<dbReference type="OrthoDB" id="9802672at2"/>
<dbReference type="Proteomes" id="UP000002531">
    <property type="component" value="Chromosome"/>
</dbReference>
<dbReference type="GO" id="GO:0003677">
    <property type="term" value="F:DNA binding"/>
    <property type="evidence" value="ECO:0007669"/>
    <property type="project" value="UniProtKB-UniRule"/>
</dbReference>
<dbReference type="GO" id="GO:0008270">
    <property type="term" value="F:zinc ion binding"/>
    <property type="evidence" value="ECO:0007669"/>
    <property type="project" value="UniProtKB-KW"/>
</dbReference>
<dbReference type="GO" id="GO:0006310">
    <property type="term" value="P:DNA recombination"/>
    <property type="evidence" value="ECO:0007669"/>
    <property type="project" value="UniProtKB-UniRule"/>
</dbReference>
<dbReference type="GO" id="GO:0006281">
    <property type="term" value="P:DNA repair"/>
    <property type="evidence" value="ECO:0007669"/>
    <property type="project" value="UniProtKB-UniRule"/>
</dbReference>
<dbReference type="CDD" id="cd01025">
    <property type="entry name" value="TOPRIM_recR"/>
    <property type="match status" value="1"/>
</dbReference>
<dbReference type="Gene3D" id="3.40.1360.10">
    <property type="match status" value="1"/>
</dbReference>
<dbReference type="Gene3D" id="6.10.250.240">
    <property type="match status" value="1"/>
</dbReference>
<dbReference type="Gene3D" id="1.10.8.420">
    <property type="entry name" value="RecR Domain 1"/>
    <property type="match status" value="1"/>
</dbReference>
<dbReference type="HAMAP" id="MF_00017">
    <property type="entry name" value="RecR"/>
    <property type="match status" value="1"/>
</dbReference>
<dbReference type="InterPro" id="IPR000093">
    <property type="entry name" value="DNA_Rcmb_RecR"/>
</dbReference>
<dbReference type="InterPro" id="IPR023627">
    <property type="entry name" value="Rcmb_RecR"/>
</dbReference>
<dbReference type="InterPro" id="IPR015967">
    <property type="entry name" value="Rcmb_RecR_Znf"/>
</dbReference>
<dbReference type="InterPro" id="IPR006171">
    <property type="entry name" value="TOPRIM_dom"/>
</dbReference>
<dbReference type="InterPro" id="IPR034137">
    <property type="entry name" value="TOPRIM_RecR"/>
</dbReference>
<dbReference type="NCBIfam" id="TIGR00615">
    <property type="entry name" value="recR"/>
    <property type="match status" value="1"/>
</dbReference>
<dbReference type="PANTHER" id="PTHR30446">
    <property type="entry name" value="RECOMBINATION PROTEIN RECR"/>
    <property type="match status" value="1"/>
</dbReference>
<dbReference type="PANTHER" id="PTHR30446:SF0">
    <property type="entry name" value="RECOMBINATION PROTEIN RECR"/>
    <property type="match status" value="1"/>
</dbReference>
<dbReference type="Pfam" id="PF21175">
    <property type="entry name" value="RecR_C"/>
    <property type="match status" value="1"/>
</dbReference>
<dbReference type="Pfam" id="PF21176">
    <property type="entry name" value="RecR_HhH"/>
    <property type="match status" value="1"/>
</dbReference>
<dbReference type="Pfam" id="PF02132">
    <property type="entry name" value="RecR_ZnF"/>
    <property type="match status" value="1"/>
</dbReference>
<dbReference type="Pfam" id="PF13662">
    <property type="entry name" value="Toprim_4"/>
    <property type="match status" value="1"/>
</dbReference>
<dbReference type="SMART" id="SM00493">
    <property type="entry name" value="TOPRIM"/>
    <property type="match status" value="1"/>
</dbReference>
<dbReference type="SUPFAM" id="SSF111304">
    <property type="entry name" value="Recombination protein RecR"/>
    <property type="match status" value="1"/>
</dbReference>
<dbReference type="PROSITE" id="PS01300">
    <property type="entry name" value="RECR"/>
    <property type="match status" value="1"/>
</dbReference>
<dbReference type="PROSITE" id="PS50880">
    <property type="entry name" value="TOPRIM"/>
    <property type="match status" value="1"/>
</dbReference>
<gene>
    <name evidence="1" type="primary">recR</name>
    <name type="ordered locus">Nwi_0367</name>
</gene>
<protein>
    <recommendedName>
        <fullName evidence="1">Recombination protein RecR</fullName>
    </recommendedName>
</protein>
<comment type="function">
    <text evidence="1">May play a role in DNA repair. It seems to be involved in an RecBC-independent recombinational process of DNA repair. It may act with RecF and RecO.</text>
</comment>
<comment type="similarity">
    <text evidence="1">Belongs to the RecR family.</text>
</comment>
<organism>
    <name type="scientific">Nitrobacter winogradskyi (strain ATCC 25391 / DSM 10237 / CIP 104748 / NCIMB 11846 / Nb-255)</name>
    <dbReference type="NCBI Taxonomy" id="323098"/>
    <lineage>
        <taxon>Bacteria</taxon>
        <taxon>Pseudomonadati</taxon>
        <taxon>Pseudomonadota</taxon>
        <taxon>Alphaproteobacteria</taxon>
        <taxon>Hyphomicrobiales</taxon>
        <taxon>Nitrobacteraceae</taxon>
        <taxon>Nitrobacter</taxon>
    </lineage>
</organism>
<proteinExistence type="inferred from homology"/>
<evidence type="ECO:0000255" key="1">
    <source>
        <dbReference type="HAMAP-Rule" id="MF_00017"/>
    </source>
</evidence>